<keyword id="KW-0903">Direct protein sequencing</keyword>
<keyword id="KW-1185">Reference proteome</keyword>
<keyword id="KW-0749">Sporulation</keyword>
<feature type="chain" id="PRO_0000079269" description="Spore coat protein S">
    <location>
        <begin position="1"/>
        <end position="351"/>
    </location>
</feature>
<feature type="sequence conflict" description="In Ref. 4; AA sequence." evidence="2" ref="4">
    <original>Q</original>
    <variation>E</variation>
    <location>
        <position position="9"/>
    </location>
</feature>
<evidence type="ECO:0000269" key="1">
    <source>
    </source>
</evidence>
<evidence type="ECO:0000305" key="2"/>
<organism>
    <name type="scientific">Bacillus subtilis (strain 168)</name>
    <dbReference type="NCBI Taxonomy" id="224308"/>
    <lineage>
        <taxon>Bacteria</taxon>
        <taxon>Bacillati</taxon>
        <taxon>Bacillota</taxon>
        <taxon>Bacilli</taxon>
        <taxon>Bacillales</taxon>
        <taxon>Bacillaceae</taxon>
        <taxon>Bacillus</taxon>
    </lineage>
</organism>
<proteinExistence type="evidence at protein level"/>
<accession>P46914</accession>
<reference key="1">
    <citation type="journal article" date="1995" name="Microbiology">
        <title>A Bacillus subtilis spore coat polypeptide gene, cotS.</title>
        <authorList>
            <person name="Abe A."/>
            <person name="Koide H."/>
            <person name="Kohno T."/>
            <person name="Watabe K."/>
        </authorList>
    </citation>
    <scope>NUCLEOTIDE SEQUENCE [GENOMIC DNA]</scope>
    <source>
        <strain>168 / 60015</strain>
    </source>
</reference>
<reference key="2">
    <citation type="journal article" date="1997" name="Microbiology">
        <title>Sequencing and functional annotation of the Bacillus subtilis genes in the 200 kb rrnB-dnaB region.</title>
        <authorList>
            <person name="Lapidus A."/>
            <person name="Galleron N."/>
            <person name="Sorokin A."/>
            <person name="Ehrlich S.D."/>
        </authorList>
    </citation>
    <scope>NUCLEOTIDE SEQUENCE [GENOMIC DNA]</scope>
    <source>
        <strain>168</strain>
    </source>
</reference>
<reference key="3">
    <citation type="journal article" date="1997" name="Nature">
        <title>The complete genome sequence of the Gram-positive bacterium Bacillus subtilis.</title>
        <authorList>
            <person name="Kunst F."/>
            <person name="Ogasawara N."/>
            <person name="Moszer I."/>
            <person name="Albertini A.M."/>
            <person name="Alloni G."/>
            <person name="Azevedo V."/>
            <person name="Bertero M.G."/>
            <person name="Bessieres P."/>
            <person name="Bolotin A."/>
            <person name="Borchert S."/>
            <person name="Borriss R."/>
            <person name="Boursier L."/>
            <person name="Brans A."/>
            <person name="Braun M."/>
            <person name="Brignell S.C."/>
            <person name="Bron S."/>
            <person name="Brouillet S."/>
            <person name="Bruschi C.V."/>
            <person name="Caldwell B."/>
            <person name="Capuano V."/>
            <person name="Carter N.M."/>
            <person name="Choi S.-K."/>
            <person name="Codani J.-J."/>
            <person name="Connerton I.F."/>
            <person name="Cummings N.J."/>
            <person name="Daniel R.A."/>
            <person name="Denizot F."/>
            <person name="Devine K.M."/>
            <person name="Duesterhoeft A."/>
            <person name="Ehrlich S.D."/>
            <person name="Emmerson P.T."/>
            <person name="Entian K.-D."/>
            <person name="Errington J."/>
            <person name="Fabret C."/>
            <person name="Ferrari E."/>
            <person name="Foulger D."/>
            <person name="Fritz C."/>
            <person name="Fujita M."/>
            <person name="Fujita Y."/>
            <person name="Fuma S."/>
            <person name="Galizzi A."/>
            <person name="Galleron N."/>
            <person name="Ghim S.-Y."/>
            <person name="Glaser P."/>
            <person name="Goffeau A."/>
            <person name="Golightly E.J."/>
            <person name="Grandi G."/>
            <person name="Guiseppi G."/>
            <person name="Guy B.J."/>
            <person name="Haga K."/>
            <person name="Haiech J."/>
            <person name="Harwood C.R."/>
            <person name="Henaut A."/>
            <person name="Hilbert H."/>
            <person name="Holsappel S."/>
            <person name="Hosono S."/>
            <person name="Hullo M.-F."/>
            <person name="Itaya M."/>
            <person name="Jones L.-M."/>
            <person name="Joris B."/>
            <person name="Karamata D."/>
            <person name="Kasahara Y."/>
            <person name="Klaerr-Blanchard M."/>
            <person name="Klein C."/>
            <person name="Kobayashi Y."/>
            <person name="Koetter P."/>
            <person name="Koningstein G."/>
            <person name="Krogh S."/>
            <person name="Kumano M."/>
            <person name="Kurita K."/>
            <person name="Lapidus A."/>
            <person name="Lardinois S."/>
            <person name="Lauber J."/>
            <person name="Lazarevic V."/>
            <person name="Lee S.-M."/>
            <person name="Levine A."/>
            <person name="Liu H."/>
            <person name="Masuda S."/>
            <person name="Mauel C."/>
            <person name="Medigue C."/>
            <person name="Medina N."/>
            <person name="Mellado R.P."/>
            <person name="Mizuno M."/>
            <person name="Moestl D."/>
            <person name="Nakai S."/>
            <person name="Noback M."/>
            <person name="Noone D."/>
            <person name="O'Reilly M."/>
            <person name="Ogawa K."/>
            <person name="Ogiwara A."/>
            <person name="Oudega B."/>
            <person name="Park S.-H."/>
            <person name="Parro V."/>
            <person name="Pohl T.M."/>
            <person name="Portetelle D."/>
            <person name="Porwollik S."/>
            <person name="Prescott A.M."/>
            <person name="Presecan E."/>
            <person name="Pujic P."/>
            <person name="Purnelle B."/>
            <person name="Rapoport G."/>
            <person name="Rey M."/>
            <person name="Reynolds S."/>
            <person name="Rieger M."/>
            <person name="Rivolta C."/>
            <person name="Rocha E."/>
            <person name="Roche B."/>
            <person name="Rose M."/>
            <person name="Sadaie Y."/>
            <person name="Sato T."/>
            <person name="Scanlan E."/>
            <person name="Schleich S."/>
            <person name="Schroeter R."/>
            <person name="Scoffone F."/>
            <person name="Sekiguchi J."/>
            <person name="Sekowska A."/>
            <person name="Seror S.J."/>
            <person name="Serror P."/>
            <person name="Shin B.-S."/>
            <person name="Soldo B."/>
            <person name="Sorokin A."/>
            <person name="Tacconi E."/>
            <person name="Takagi T."/>
            <person name="Takahashi H."/>
            <person name="Takemaru K."/>
            <person name="Takeuchi M."/>
            <person name="Tamakoshi A."/>
            <person name="Tanaka T."/>
            <person name="Terpstra P."/>
            <person name="Tognoni A."/>
            <person name="Tosato V."/>
            <person name="Uchiyama S."/>
            <person name="Vandenbol M."/>
            <person name="Vannier F."/>
            <person name="Vassarotti A."/>
            <person name="Viari A."/>
            <person name="Wambutt R."/>
            <person name="Wedler E."/>
            <person name="Wedler H."/>
            <person name="Weitzenegger T."/>
            <person name="Winters P."/>
            <person name="Wipat A."/>
            <person name="Yamamoto H."/>
            <person name="Yamane K."/>
            <person name="Yasumoto K."/>
            <person name="Yata K."/>
            <person name="Yoshida K."/>
            <person name="Yoshikawa H.-F."/>
            <person name="Zumstein E."/>
            <person name="Yoshikawa H."/>
            <person name="Danchin A."/>
        </authorList>
    </citation>
    <scope>NUCLEOTIDE SEQUENCE [LARGE SCALE GENOMIC DNA]</scope>
    <source>
        <strain>168</strain>
    </source>
</reference>
<reference key="4">
    <citation type="journal article" date="1993" name="Microbiol. Immunol.">
        <title>Purification of Bacillus subtilis spore coat protein by electrophoretic elution procedure and determination of NH2-terminal amino acid sequences.</title>
        <authorList>
            <person name="Abe A."/>
            <person name="Ogawa S."/>
            <person name="Kohno T."/>
            <person name="Watabe K."/>
        </authorList>
    </citation>
    <scope>PROTEIN SEQUENCE OF 1-30</scope>
</reference>
<reference key="5">
    <citation type="journal article" date="2003" name="J. Bacteriol.">
        <title>Proteomic analysis of the spore coats of Bacillus subtilis and Bacillus anthracis.</title>
        <authorList>
            <person name="Lai E.-M."/>
            <person name="Phadke N.D."/>
            <person name="Kachman M.T."/>
            <person name="Giorno R."/>
            <person name="Vazquez S."/>
            <person name="Vazquez J.A."/>
            <person name="Maddock J.R."/>
            <person name="Driks A."/>
        </authorList>
    </citation>
    <scope>IDENTIFICATION BY MASS SPECTROMETRY</scope>
    <scope>SUBCELLULAR LOCATION</scope>
</reference>
<gene>
    <name type="primary">cotS</name>
    <name type="ordered locus">BSU30900</name>
</gene>
<comment type="function">
    <text>Seems to be required for the assembly of the CotSA protein in spores.</text>
</comment>
<comment type="subcellular location">
    <subcellularLocation>
        <location evidence="1">Spore coat</location>
    </subcellularLocation>
</comment>
<comment type="developmental stage">
    <text>Late stage of sporulation.</text>
</comment>
<comment type="similarity">
    <text evidence="2">Belongs to the CotS family.</text>
</comment>
<dbReference type="EMBL" id="D31847">
    <property type="protein sequence ID" value="BAA06634.1"/>
    <property type="molecule type" value="Genomic_DNA"/>
</dbReference>
<dbReference type="EMBL" id="AF008220">
    <property type="protein sequence ID" value="AAC00220.1"/>
    <property type="molecule type" value="Genomic_DNA"/>
</dbReference>
<dbReference type="EMBL" id="AL009126">
    <property type="protein sequence ID" value="CAB15068.1"/>
    <property type="molecule type" value="Genomic_DNA"/>
</dbReference>
<dbReference type="PIR" id="I39808">
    <property type="entry name" value="I39808"/>
</dbReference>
<dbReference type="RefSeq" id="NP_390968.1">
    <property type="nucleotide sequence ID" value="NC_000964.3"/>
</dbReference>
<dbReference type="RefSeq" id="WP_003229031.1">
    <property type="nucleotide sequence ID" value="NZ_OZ025638.1"/>
</dbReference>
<dbReference type="SMR" id="P46914"/>
<dbReference type="FunCoup" id="P46914">
    <property type="interactions" value="108"/>
</dbReference>
<dbReference type="STRING" id="224308.BSU30900"/>
<dbReference type="PaxDb" id="224308-BSU30900"/>
<dbReference type="EnsemblBacteria" id="CAB15068">
    <property type="protein sequence ID" value="CAB15068"/>
    <property type="gene ID" value="BSU_30900"/>
</dbReference>
<dbReference type="GeneID" id="936628"/>
<dbReference type="KEGG" id="bsu:BSU30900"/>
<dbReference type="PATRIC" id="fig|224308.179.peg.3349"/>
<dbReference type="eggNOG" id="COG2334">
    <property type="taxonomic scope" value="Bacteria"/>
</dbReference>
<dbReference type="InParanoid" id="P46914"/>
<dbReference type="OrthoDB" id="9771902at2"/>
<dbReference type="BioCyc" id="BSUB:BSU30900-MONOMER"/>
<dbReference type="Proteomes" id="UP000001570">
    <property type="component" value="Chromosome"/>
</dbReference>
<dbReference type="GO" id="GO:0042601">
    <property type="term" value="C:endospore-forming forespore"/>
    <property type="evidence" value="ECO:0000318"/>
    <property type="project" value="GO_Central"/>
</dbReference>
<dbReference type="GO" id="GO:0030435">
    <property type="term" value="P:sporulation resulting in formation of a cellular spore"/>
    <property type="evidence" value="ECO:0007669"/>
    <property type="project" value="UniProtKB-KW"/>
</dbReference>
<dbReference type="Gene3D" id="3.90.1200.10">
    <property type="match status" value="1"/>
</dbReference>
<dbReference type="Gene3D" id="3.30.200.20">
    <property type="entry name" value="Phosphorylase Kinase, domain 1"/>
    <property type="match status" value="1"/>
</dbReference>
<dbReference type="InterPro" id="IPR047175">
    <property type="entry name" value="CotS-like"/>
</dbReference>
<dbReference type="InterPro" id="IPR011009">
    <property type="entry name" value="Kinase-like_dom_sf"/>
</dbReference>
<dbReference type="InterPro" id="IPR014255">
    <property type="entry name" value="Spore_coat_CotS"/>
</dbReference>
<dbReference type="NCBIfam" id="TIGR02906">
    <property type="entry name" value="spore_CotS"/>
    <property type="match status" value="1"/>
</dbReference>
<dbReference type="PANTHER" id="PTHR39179">
    <property type="entry name" value="SPORE COAT PROTEIN I"/>
    <property type="match status" value="1"/>
</dbReference>
<dbReference type="PANTHER" id="PTHR39179:SF1">
    <property type="entry name" value="SPORE COAT PROTEIN I"/>
    <property type="match status" value="1"/>
</dbReference>
<dbReference type="SUPFAM" id="SSF56112">
    <property type="entry name" value="Protein kinase-like (PK-like)"/>
    <property type="match status" value="1"/>
</dbReference>
<protein>
    <recommendedName>
        <fullName>Spore coat protein S</fullName>
    </recommendedName>
    <alternativeName>
        <fullName>Coat protein 40 kDa component 2</fullName>
        <shortName>COT40-2</shortName>
    </alternativeName>
</protein>
<name>COTS_BACSU</name>
<sequence length="351" mass="41084">MYQKEHEEQIVSEILSYYPFHIDHVALKSNKSGRKIWEVETDHGPKLLKEAQMKPERMLFITQAHAHLQEKGLPIAPIHQTKNGGSCLGTDQVSYSLYDKVTGKEMIYYDAEQMKKVMSFAGHFHHASKGYVCTDESKKRSRLGKWHKLYRWKLQELEGNMQIAASYPDDVFSQTFLKHADKMLARGKEALRALDDSEYETWTKETLEHGGFCFQDFTLARLTEIEGEPFLKELHSITYDLPSRDLRILLNKVMVKLSVWDTDFMVALLAAYDAVYPLTEKQYEVLWIDLAFPHLFCAIGHKYYLKQKKTWSDEKYNWALQNMISVEESKDSFLDKLPELYKKIKAYREAN</sequence>